<reference key="1">
    <citation type="journal article" date="2006" name="PLoS Genet.">
        <title>Secrets of soil survival revealed by the genome sequence of Arthrobacter aurescens TC1.</title>
        <authorList>
            <person name="Mongodin E.F."/>
            <person name="Shapir N."/>
            <person name="Daugherty S.C."/>
            <person name="DeBoy R.T."/>
            <person name="Emerson J.B."/>
            <person name="Shvartzbeyn A."/>
            <person name="Radune D."/>
            <person name="Vamathevan J."/>
            <person name="Riggs F."/>
            <person name="Grinberg V."/>
            <person name="Khouri H.M."/>
            <person name="Wackett L.P."/>
            <person name="Nelson K.E."/>
            <person name="Sadowsky M.J."/>
        </authorList>
    </citation>
    <scope>NUCLEOTIDE SEQUENCE [LARGE SCALE GENOMIC DNA]</scope>
    <source>
        <strain>TC1</strain>
    </source>
</reference>
<proteinExistence type="inferred from homology"/>
<evidence type="ECO:0000255" key="1">
    <source>
        <dbReference type="HAMAP-Rule" id="MF_00532"/>
    </source>
</evidence>
<evidence type="ECO:0000256" key="2">
    <source>
        <dbReference type="SAM" id="MobiDB-lite"/>
    </source>
</evidence>
<evidence type="ECO:0000305" key="3"/>
<sequence>MAQNEELTAEAVEAEETLTSYTSESTSAEDAPKKERPALTVAGAAVGRRKEAVARVRVVPGSGKWTINGRTLDNYFPNKLHQQDVNEPFKILDLEGAYDVIARIHGGGISGQAGALRLGVARSLNEIDVDNNRATLKKAGYLSRDARVIERKKAGLKKARKAQQYSKR</sequence>
<protein>
    <recommendedName>
        <fullName evidence="1">Small ribosomal subunit protein uS9</fullName>
    </recommendedName>
    <alternativeName>
        <fullName evidence="3">30S ribosomal protein S9</fullName>
    </alternativeName>
</protein>
<name>RS9_PAEAT</name>
<accession>A1R8Q1</accession>
<keyword id="KW-0687">Ribonucleoprotein</keyword>
<keyword id="KW-0689">Ribosomal protein</keyword>
<comment type="similarity">
    <text evidence="1">Belongs to the universal ribosomal protein uS9 family.</text>
</comment>
<feature type="chain" id="PRO_1000051155" description="Small ribosomal subunit protein uS9">
    <location>
        <begin position="1"/>
        <end position="168"/>
    </location>
</feature>
<feature type="region of interest" description="Disordered" evidence="2">
    <location>
        <begin position="1"/>
        <end position="36"/>
    </location>
</feature>
<feature type="compositionally biased region" description="Low complexity" evidence="2">
    <location>
        <begin position="1"/>
        <end position="29"/>
    </location>
</feature>
<organism>
    <name type="scientific">Paenarthrobacter aurescens (strain TC1)</name>
    <dbReference type="NCBI Taxonomy" id="290340"/>
    <lineage>
        <taxon>Bacteria</taxon>
        <taxon>Bacillati</taxon>
        <taxon>Actinomycetota</taxon>
        <taxon>Actinomycetes</taxon>
        <taxon>Micrococcales</taxon>
        <taxon>Micrococcaceae</taxon>
        <taxon>Paenarthrobacter</taxon>
    </lineage>
</organism>
<gene>
    <name evidence="1" type="primary">rpsI</name>
    <name type="ordered locus">AAur_2904</name>
</gene>
<dbReference type="EMBL" id="CP000474">
    <property type="protein sequence ID" value="ABM08978.1"/>
    <property type="molecule type" value="Genomic_DNA"/>
</dbReference>
<dbReference type="RefSeq" id="WP_011775553.1">
    <property type="nucleotide sequence ID" value="NC_008711.1"/>
</dbReference>
<dbReference type="SMR" id="A1R8Q1"/>
<dbReference type="STRING" id="290340.AAur_2904"/>
<dbReference type="KEGG" id="aau:AAur_2904"/>
<dbReference type="eggNOG" id="COG0103">
    <property type="taxonomic scope" value="Bacteria"/>
</dbReference>
<dbReference type="HOGENOM" id="CLU_046483_2_0_11"/>
<dbReference type="OrthoDB" id="9803965at2"/>
<dbReference type="Proteomes" id="UP000000637">
    <property type="component" value="Chromosome"/>
</dbReference>
<dbReference type="GO" id="GO:0005737">
    <property type="term" value="C:cytoplasm"/>
    <property type="evidence" value="ECO:0007669"/>
    <property type="project" value="UniProtKB-ARBA"/>
</dbReference>
<dbReference type="GO" id="GO:0015935">
    <property type="term" value="C:small ribosomal subunit"/>
    <property type="evidence" value="ECO:0007669"/>
    <property type="project" value="TreeGrafter"/>
</dbReference>
<dbReference type="GO" id="GO:0003723">
    <property type="term" value="F:RNA binding"/>
    <property type="evidence" value="ECO:0007669"/>
    <property type="project" value="TreeGrafter"/>
</dbReference>
<dbReference type="GO" id="GO:0003735">
    <property type="term" value="F:structural constituent of ribosome"/>
    <property type="evidence" value="ECO:0007669"/>
    <property type="project" value="InterPro"/>
</dbReference>
<dbReference type="GO" id="GO:0006412">
    <property type="term" value="P:translation"/>
    <property type="evidence" value="ECO:0007669"/>
    <property type="project" value="UniProtKB-UniRule"/>
</dbReference>
<dbReference type="FunFam" id="3.30.230.10:FF:000001">
    <property type="entry name" value="30S ribosomal protein S9"/>
    <property type="match status" value="1"/>
</dbReference>
<dbReference type="Gene3D" id="3.30.230.10">
    <property type="match status" value="1"/>
</dbReference>
<dbReference type="HAMAP" id="MF_00532_B">
    <property type="entry name" value="Ribosomal_uS9_B"/>
    <property type="match status" value="1"/>
</dbReference>
<dbReference type="InterPro" id="IPR020568">
    <property type="entry name" value="Ribosomal_Su5_D2-typ_SF"/>
</dbReference>
<dbReference type="InterPro" id="IPR000754">
    <property type="entry name" value="Ribosomal_uS9"/>
</dbReference>
<dbReference type="InterPro" id="IPR023035">
    <property type="entry name" value="Ribosomal_uS9_bac/plastid"/>
</dbReference>
<dbReference type="InterPro" id="IPR020574">
    <property type="entry name" value="Ribosomal_uS9_CS"/>
</dbReference>
<dbReference type="InterPro" id="IPR014721">
    <property type="entry name" value="Ribsml_uS5_D2-typ_fold_subgr"/>
</dbReference>
<dbReference type="NCBIfam" id="NF001099">
    <property type="entry name" value="PRK00132.1"/>
    <property type="match status" value="1"/>
</dbReference>
<dbReference type="PANTHER" id="PTHR21569">
    <property type="entry name" value="RIBOSOMAL PROTEIN S9"/>
    <property type="match status" value="1"/>
</dbReference>
<dbReference type="PANTHER" id="PTHR21569:SF1">
    <property type="entry name" value="SMALL RIBOSOMAL SUBUNIT PROTEIN US9M"/>
    <property type="match status" value="1"/>
</dbReference>
<dbReference type="Pfam" id="PF00380">
    <property type="entry name" value="Ribosomal_S9"/>
    <property type="match status" value="1"/>
</dbReference>
<dbReference type="SUPFAM" id="SSF54211">
    <property type="entry name" value="Ribosomal protein S5 domain 2-like"/>
    <property type="match status" value="1"/>
</dbReference>
<dbReference type="PROSITE" id="PS00360">
    <property type="entry name" value="RIBOSOMAL_S9"/>
    <property type="match status" value="1"/>
</dbReference>